<organism>
    <name type="scientific">Sus scrofa</name>
    <name type="common">Pig</name>
    <dbReference type="NCBI Taxonomy" id="9823"/>
    <lineage>
        <taxon>Eukaryota</taxon>
        <taxon>Metazoa</taxon>
        <taxon>Chordata</taxon>
        <taxon>Craniata</taxon>
        <taxon>Vertebrata</taxon>
        <taxon>Euteleostomi</taxon>
        <taxon>Mammalia</taxon>
        <taxon>Eutheria</taxon>
        <taxon>Laurasiatheria</taxon>
        <taxon>Artiodactyla</taxon>
        <taxon>Suina</taxon>
        <taxon>Suidae</taxon>
        <taxon>Sus</taxon>
    </lineage>
</organism>
<comment type="function">
    <text evidence="1">Chemoattractant for blood monocytes, memory T-helper cells and eosinophils. Causes the release of histamine from basophils and activates eosinophils. May activate several chemokine receptors including CCR1, CCR3, CCR4 and CCR5. May also be an agonist of the G protein-coupled receptor GPR75. Together with GPR75, may play a role in neuron survival through activation of a downstream signaling pathway involving the PI3, Akt and MAP kinases. By activating GPR75 may also play a role in insulin secretion by islet cells.</text>
</comment>
<comment type="subcellular location">
    <subcellularLocation>
        <location>Secreted</location>
    </subcellularLocation>
</comment>
<comment type="similarity">
    <text evidence="2">Belongs to the intercrine beta (chemokine CC) family.</text>
</comment>
<reference key="1">
    <citation type="journal article" date="1996" name="Mamm. Genome">
        <title>Evaluation and characterization of a porcine small intestine cDNA library: analysis of 839 clones.</title>
        <authorList>
            <person name="Winteroe A.K."/>
            <person name="Fredholm M."/>
            <person name="Davies W."/>
        </authorList>
    </citation>
    <scope>NUCLEOTIDE SEQUENCE [LARGE SCALE MRNA]</scope>
    <source>
        <tissue>Small intestine</tissue>
    </source>
</reference>
<protein>
    <recommendedName>
        <fullName>C-C motif chemokine 5</fullName>
    </recommendedName>
    <alternativeName>
        <fullName>SIS-delta</fullName>
    </alternativeName>
    <alternativeName>
        <fullName>Small-inducible cytokine A5</fullName>
    </alternativeName>
    <alternativeName>
        <fullName>T-cell-specific protein RANTES</fullName>
    </alternativeName>
</protein>
<proteinExistence type="evidence at transcript level"/>
<feature type="chain" id="PRO_0000144303" description="C-C motif chemokine 5">
    <location>
        <begin position="1" status="less than"/>
        <end position="50"/>
    </location>
</feature>
<feature type="non-terminal residue">
    <location>
        <position position="1"/>
    </location>
</feature>
<sequence length="50" mass="5937">RCPXHLQEYFYTSSKCSMAAVVFITRKNRQVCANPEKKWVREYINSLELS</sequence>
<gene>
    <name type="primary">CCL5</name>
    <name type="synonym">SCYA5</name>
</gene>
<accession>Q29288</accession>
<evidence type="ECO:0000250" key="1">
    <source>
        <dbReference type="UniProtKB" id="P13501"/>
    </source>
</evidence>
<evidence type="ECO:0000305" key="2"/>
<keyword id="KW-0145">Chemotaxis</keyword>
<keyword id="KW-0202">Cytokine</keyword>
<keyword id="KW-0395">Inflammatory response</keyword>
<keyword id="KW-1185">Reference proteome</keyword>
<keyword id="KW-0964">Secreted</keyword>
<name>CCL5_PIG</name>
<dbReference type="EMBL" id="F14636">
    <property type="protein sequence ID" value="CAA23170.1"/>
    <property type="molecule type" value="mRNA"/>
</dbReference>
<dbReference type="STRING" id="9823.ENSSSCP00000028561"/>
<dbReference type="PaxDb" id="9823-ENSSSCP00000028561"/>
<dbReference type="eggNOG" id="ENOG502S8D1">
    <property type="taxonomic scope" value="Eukaryota"/>
</dbReference>
<dbReference type="InParanoid" id="Q29288"/>
<dbReference type="Proteomes" id="UP000008227">
    <property type="component" value="Unplaced"/>
</dbReference>
<dbReference type="Proteomes" id="UP000314985">
    <property type="component" value="Unplaced"/>
</dbReference>
<dbReference type="Proteomes" id="UP000694570">
    <property type="component" value="Unplaced"/>
</dbReference>
<dbReference type="Proteomes" id="UP000694571">
    <property type="component" value="Unplaced"/>
</dbReference>
<dbReference type="Proteomes" id="UP000694720">
    <property type="component" value="Unplaced"/>
</dbReference>
<dbReference type="Proteomes" id="UP000694722">
    <property type="component" value="Unplaced"/>
</dbReference>
<dbReference type="Proteomes" id="UP000694723">
    <property type="component" value="Unplaced"/>
</dbReference>
<dbReference type="Proteomes" id="UP000694724">
    <property type="component" value="Unplaced"/>
</dbReference>
<dbReference type="Proteomes" id="UP000694725">
    <property type="component" value="Unplaced"/>
</dbReference>
<dbReference type="Proteomes" id="UP000694726">
    <property type="component" value="Unplaced"/>
</dbReference>
<dbReference type="Proteomes" id="UP000694727">
    <property type="component" value="Unplaced"/>
</dbReference>
<dbReference type="Proteomes" id="UP000694728">
    <property type="component" value="Unplaced"/>
</dbReference>
<dbReference type="GO" id="GO:0005615">
    <property type="term" value="C:extracellular space"/>
    <property type="evidence" value="ECO:0000318"/>
    <property type="project" value="GO_Central"/>
</dbReference>
<dbReference type="GO" id="GO:0048020">
    <property type="term" value="F:CCR chemokine receptor binding"/>
    <property type="evidence" value="ECO:0000318"/>
    <property type="project" value="GO_Central"/>
</dbReference>
<dbReference type="GO" id="GO:0008009">
    <property type="term" value="F:chemokine activity"/>
    <property type="evidence" value="ECO:0000318"/>
    <property type="project" value="GO_Central"/>
</dbReference>
<dbReference type="GO" id="GO:0061844">
    <property type="term" value="P:antimicrobial humoral immune response mediated by antimicrobial peptide"/>
    <property type="evidence" value="ECO:0000318"/>
    <property type="project" value="GO_Central"/>
</dbReference>
<dbReference type="GO" id="GO:0070098">
    <property type="term" value="P:chemokine-mediated signaling pathway"/>
    <property type="evidence" value="ECO:0000250"/>
    <property type="project" value="UniProtKB"/>
</dbReference>
<dbReference type="GO" id="GO:0048245">
    <property type="term" value="P:eosinophil chemotaxis"/>
    <property type="evidence" value="ECO:0000318"/>
    <property type="project" value="GO_Central"/>
</dbReference>
<dbReference type="GO" id="GO:0007186">
    <property type="term" value="P:G protein-coupled receptor signaling pathway"/>
    <property type="evidence" value="ECO:0000250"/>
    <property type="project" value="UniProtKB"/>
</dbReference>
<dbReference type="GO" id="GO:0006954">
    <property type="term" value="P:inflammatory response"/>
    <property type="evidence" value="ECO:0000318"/>
    <property type="project" value="GO_Central"/>
</dbReference>
<dbReference type="GO" id="GO:0030335">
    <property type="term" value="P:positive regulation of cell migration"/>
    <property type="evidence" value="ECO:0000318"/>
    <property type="project" value="GO_Central"/>
</dbReference>
<dbReference type="GO" id="GO:0050796">
    <property type="term" value="P:regulation of insulin secretion"/>
    <property type="evidence" value="ECO:0000250"/>
    <property type="project" value="UniProtKB"/>
</dbReference>
<dbReference type="CDD" id="cd00272">
    <property type="entry name" value="Chemokine_CC"/>
    <property type="match status" value="1"/>
</dbReference>
<dbReference type="FunFam" id="2.40.50.40:FF:000002">
    <property type="entry name" value="C-C motif chemokine"/>
    <property type="match status" value="1"/>
</dbReference>
<dbReference type="Gene3D" id="2.40.50.40">
    <property type="match status" value="1"/>
</dbReference>
<dbReference type="InterPro" id="IPR039809">
    <property type="entry name" value="Chemokine_b/g/d"/>
</dbReference>
<dbReference type="InterPro" id="IPR001811">
    <property type="entry name" value="Chemokine_IL8-like_dom"/>
</dbReference>
<dbReference type="InterPro" id="IPR036048">
    <property type="entry name" value="Interleukin_8-like_sf"/>
</dbReference>
<dbReference type="PANTHER" id="PTHR12015:SF170">
    <property type="entry name" value="C-C MOTIF CHEMOKINE 5"/>
    <property type="match status" value="1"/>
</dbReference>
<dbReference type="PANTHER" id="PTHR12015">
    <property type="entry name" value="SMALL INDUCIBLE CYTOKINE A"/>
    <property type="match status" value="1"/>
</dbReference>
<dbReference type="Pfam" id="PF00048">
    <property type="entry name" value="IL8"/>
    <property type="match status" value="1"/>
</dbReference>
<dbReference type="SMART" id="SM00199">
    <property type="entry name" value="SCY"/>
    <property type="match status" value="1"/>
</dbReference>
<dbReference type="SUPFAM" id="SSF54117">
    <property type="entry name" value="Interleukin 8-like chemokines"/>
    <property type="match status" value="1"/>
</dbReference>